<name>NUOI_PSEPK</name>
<proteinExistence type="inferred from homology"/>
<protein>
    <recommendedName>
        <fullName evidence="1">NADH-quinone oxidoreductase subunit I</fullName>
        <ecNumber evidence="1">7.1.1.-</ecNumber>
    </recommendedName>
    <alternativeName>
        <fullName evidence="1">NADH dehydrogenase I subunit I</fullName>
    </alternativeName>
    <alternativeName>
        <fullName evidence="1">NDH-1 subunit I</fullName>
    </alternativeName>
</protein>
<accession>Q88FH0</accession>
<gene>
    <name evidence="1" type="primary">nuoI</name>
    <name type="ordered locus">PP_4126</name>
</gene>
<organism>
    <name type="scientific">Pseudomonas putida (strain ATCC 47054 / DSM 6125 / CFBP 8728 / NCIMB 11950 / KT2440)</name>
    <dbReference type="NCBI Taxonomy" id="160488"/>
    <lineage>
        <taxon>Bacteria</taxon>
        <taxon>Pseudomonadati</taxon>
        <taxon>Pseudomonadota</taxon>
        <taxon>Gammaproteobacteria</taxon>
        <taxon>Pseudomonadales</taxon>
        <taxon>Pseudomonadaceae</taxon>
        <taxon>Pseudomonas</taxon>
    </lineage>
</organism>
<keyword id="KW-0004">4Fe-4S</keyword>
<keyword id="KW-0997">Cell inner membrane</keyword>
<keyword id="KW-1003">Cell membrane</keyword>
<keyword id="KW-0408">Iron</keyword>
<keyword id="KW-0411">Iron-sulfur</keyword>
<keyword id="KW-0472">Membrane</keyword>
<keyword id="KW-0479">Metal-binding</keyword>
<keyword id="KW-0520">NAD</keyword>
<keyword id="KW-0874">Quinone</keyword>
<keyword id="KW-1185">Reference proteome</keyword>
<keyword id="KW-0677">Repeat</keyword>
<keyword id="KW-1278">Translocase</keyword>
<keyword id="KW-0830">Ubiquinone</keyword>
<reference key="1">
    <citation type="journal article" date="2002" name="Environ. Microbiol.">
        <title>Complete genome sequence and comparative analysis of the metabolically versatile Pseudomonas putida KT2440.</title>
        <authorList>
            <person name="Nelson K.E."/>
            <person name="Weinel C."/>
            <person name="Paulsen I.T."/>
            <person name="Dodson R.J."/>
            <person name="Hilbert H."/>
            <person name="Martins dos Santos V.A.P."/>
            <person name="Fouts D.E."/>
            <person name="Gill S.R."/>
            <person name="Pop M."/>
            <person name="Holmes M."/>
            <person name="Brinkac L.M."/>
            <person name="Beanan M.J."/>
            <person name="DeBoy R.T."/>
            <person name="Daugherty S.C."/>
            <person name="Kolonay J.F."/>
            <person name="Madupu R."/>
            <person name="Nelson W.C."/>
            <person name="White O."/>
            <person name="Peterson J.D."/>
            <person name="Khouri H.M."/>
            <person name="Hance I."/>
            <person name="Chris Lee P."/>
            <person name="Holtzapple E.K."/>
            <person name="Scanlan D."/>
            <person name="Tran K."/>
            <person name="Moazzez A."/>
            <person name="Utterback T.R."/>
            <person name="Rizzo M."/>
            <person name="Lee K."/>
            <person name="Kosack D."/>
            <person name="Moestl D."/>
            <person name="Wedler H."/>
            <person name="Lauber J."/>
            <person name="Stjepandic D."/>
            <person name="Hoheisel J."/>
            <person name="Straetz M."/>
            <person name="Heim S."/>
            <person name="Kiewitz C."/>
            <person name="Eisen J.A."/>
            <person name="Timmis K.N."/>
            <person name="Duesterhoeft A."/>
            <person name="Tuemmler B."/>
            <person name="Fraser C.M."/>
        </authorList>
    </citation>
    <scope>NUCLEOTIDE SEQUENCE [LARGE SCALE GENOMIC DNA]</scope>
    <source>
        <strain>ATCC 47054 / DSM 6125 / CFBP 8728 / NCIMB 11950 / KT2440</strain>
    </source>
</reference>
<evidence type="ECO:0000255" key="1">
    <source>
        <dbReference type="HAMAP-Rule" id="MF_01351"/>
    </source>
</evidence>
<feature type="chain" id="PRO_0000245731" description="NADH-quinone oxidoreductase subunit I">
    <location>
        <begin position="1"/>
        <end position="182"/>
    </location>
</feature>
<feature type="domain" description="4Fe-4S ferredoxin-type 1" evidence="1">
    <location>
        <begin position="52"/>
        <end position="82"/>
    </location>
</feature>
<feature type="domain" description="4Fe-4S ferredoxin-type 2" evidence="1">
    <location>
        <begin position="92"/>
        <end position="121"/>
    </location>
</feature>
<feature type="binding site" evidence="1">
    <location>
        <position position="62"/>
    </location>
    <ligand>
        <name>[4Fe-4S] cluster</name>
        <dbReference type="ChEBI" id="CHEBI:49883"/>
        <label>1</label>
    </ligand>
</feature>
<feature type="binding site" evidence="1">
    <location>
        <position position="65"/>
    </location>
    <ligand>
        <name>[4Fe-4S] cluster</name>
        <dbReference type="ChEBI" id="CHEBI:49883"/>
        <label>1</label>
    </ligand>
</feature>
<feature type="binding site" evidence="1">
    <location>
        <position position="68"/>
    </location>
    <ligand>
        <name>[4Fe-4S] cluster</name>
        <dbReference type="ChEBI" id="CHEBI:49883"/>
        <label>1</label>
    </ligand>
</feature>
<feature type="binding site" evidence="1">
    <location>
        <position position="72"/>
    </location>
    <ligand>
        <name>[4Fe-4S] cluster</name>
        <dbReference type="ChEBI" id="CHEBI:49883"/>
        <label>2</label>
    </ligand>
</feature>
<feature type="binding site" evidence="1">
    <location>
        <position position="101"/>
    </location>
    <ligand>
        <name>[4Fe-4S] cluster</name>
        <dbReference type="ChEBI" id="CHEBI:49883"/>
        <label>2</label>
    </ligand>
</feature>
<feature type="binding site" evidence="1">
    <location>
        <position position="104"/>
    </location>
    <ligand>
        <name>[4Fe-4S] cluster</name>
        <dbReference type="ChEBI" id="CHEBI:49883"/>
        <label>2</label>
    </ligand>
</feature>
<feature type="binding site" evidence="1">
    <location>
        <position position="107"/>
    </location>
    <ligand>
        <name>[4Fe-4S] cluster</name>
        <dbReference type="ChEBI" id="CHEBI:49883"/>
        <label>2</label>
    </ligand>
</feature>
<feature type="binding site" evidence="1">
    <location>
        <position position="111"/>
    </location>
    <ligand>
        <name>[4Fe-4S] cluster</name>
        <dbReference type="ChEBI" id="CHEBI:49883"/>
        <label>1</label>
    </ligand>
</feature>
<dbReference type="EC" id="7.1.1.-" evidence="1"/>
<dbReference type="EMBL" id="AE015451">
    <property type="protein sequence ID" value="AAN69709.1"/>
    <property type="molecule type" value="Genomic_DNA"/>
</dbReference>
<dbReference type="RefSeq" id="NP_746245.1">
    <property type="nucleotide sequence ID" value="NC_002947.4"/>
</dbReference>
<dbReference type="RefSeq" id="WP_003251442.1">
    <property type="nucleotide sequence ID" value="NZ_CP169744.1"/>
</dbReference>
<dbReference type="SMR" id="Q88FH0"/>
<dbReference type="STRING" id="160488.PP_4126"/>
<dbReference type="PaxDb" id="160488-PP_4126"/>
<dbReference type="GeneID" id="97169077"/>
<dbReference type="KEGG" id="ppu:PP_4126"/>
<dbReference type="PATRIC" id="fig|160488.4.peg.4385"/>
<dbReference type="eggNOG" id="COG1143">
    <property type="taxonomic scope" value="Bacteria"/>
</dbReference>
<dbReference type="HOGENOM" id="CLU_067218_4_3_6"/>
<dbReference type="OrthoDB" id="9808559at2"/>
<dbReference type="PhylomeDB" id="Q88FH0"/>
<dbReference type="BioCyc" id="MetaCyc:G1G01-4393-MONOMER"/>
<dbReference type="BioCyc" id="PPUT160488:G1G01-4393-MONOMER"/>
<dbReference type="Proteomes" id="UP000000556">
    <property type="component" value="Chromosome"/>
</dbReference>
<dbReference type="GO" id="GO:0005886">
    <property type="term" value="C:plasma membrane"/>
    <property type="evidence" value="ECO:0007669"/>
    <property type="project" value="UniProtKB-SubCell"/>
</dbReference>
<dbReference type="GO" id="GO:0051539">
    <property type="term" value="F:4 iron, 4 sulfur cluster binding"/>
    <property type="evidence" value="ECO:0007669"/>
    <property type="project" value="UniProtKB-KW"/>
</dbReference>
<dbReference type="GO" id="GO:0005506">
    <property type="term" value="F:iron ion binding"/>
    <property type="evidence" value="ECO:0007669"/>
    <property type="project" value="UniProtKB-UniRule"/>
</dbReference>
<dbReference type="GO" id="GO:0050136">
    <property type="term" value="F:NADH:ubiquinone reductase (non-electrogenic) activity"/>
    <property type="evidence" value="ECO:0007669"/>
    <property type="project" value="UniProtKB-UniRule"/>
</dbReference>
<dbReference type="GO" id="GO:0048038">
    <property type="term" value="F:quinone binding"/>
    <property type="evidence" value="ECO:0007669"/>
    <property type="project" value="UniProtKB-KW"/>
</dbReference>
<dbReference type="GO" id="GO:0009060">
    <property type="term" value="P:aerobic respiration"/>
    <property type="evidence" value="ECO:0007669"/>
    <property type="project" value="TreeGrafter"/>
</dbReference>
<dbReference type="FunFam" id="3.30.70.3270:FF:000002">
    <property type="entry name" value="NADH-quinone oxidoreductase subunit I"/>
    <property type="match status" value="1"/>
</dbReference>
<dbReference type="Gene3D" id="3.30.70.3270">
    <property type="match status" value="1"/>
</dbReference>
<dbReference type="HAMAP" id="MF_01351">
    <property type="entry name" value="NDH1_NuoI"/>
    <property type="match status" value="1"/>
</dbReference>
<dbReference type="InterPro" id="IPR017896">
    <property type="entry name" value="4Fe4S_Fe-S-bd"/>
</dbReference>
<dbReference type="InterPro" id="IPR017900">
    <property type="entry name" value="4Fe4S_Fe_S_CS"/>
</dbReference>
<dbReference type="InterPro" id="IPR010226">
    <property type="entry name" value="NADH_quinone_OxRdtase_chainI"/>
</dbReference>
<dbReference type="NCBIfam" id="TIGR01971">
    <property type="entry name" value="NuoI"/>
    <property type="match status" value="1"/>
</dbReference>
<dbReference type="NCBIfam" id="NF004536">
    <property type="entry name" value="PRK05888.1-1"/>
    <property type="match status" value="1"/>
</dbReference>
<dbReference type="PANTHER" id="PTHR10849:SF20">
    <property type="entry name" value="NADH DEHYDROGENASE [UBIQUINONE] IRON-SULFUR PROTEIN 8, MITOCHONDRIAL"/>
    <property type="match status" value="1"/>
</dbReference>
<dbReference type="PANTHER" id="PTHR10849">
    <property type="entry name" value="NADH DEHYDROGENASE UBIQUINONE IRON-SULFUR PROTEIN 8, MITOCHONDRIAL"/>
    <property type="match status" value="1"/>
</dbReference>
<dbReference type="Pfam" id="PF12838">
    <property type="entry name" value="Fer4_7"/>
    <property type="match status" value="1"/>
</dbReference>
<dbReference type="SUPFAM" id="SSF54862">
    <property type="entry name" value="4Fe-4S ferredoxins"/>
    <property type="match status" value="1"/>
</dbReference>
<dbReference type="PROSITE" id="PS00198">
    <property type="entry name" value="4FE4S_FER_1"/>
    <property type="match status" value="2"/>
</dbReference>
<dbReference type="PROSITE" id="PS51379">
    <property type="entry name" value="4FE4S_FER_2"/>
    <property type="match status" value="2"/>
</dbReference>
<sequence>MFKYIGDIVKGTGTQLRSLAMVFSHGFRKRDTLQYPEEPVYLPPRYRGRIVLTRDPDGEERCVACNLCAVACPVGCISLQKAETEDGRWYPEFFRINFSRCIFCGLCEEACPTTAIQLTPDFEMAEFKRQDLVYEKEDLLISGPGKNPDYNFYRVAGMAIAGKPKGSAQNEAEPINVKSLLP</sequence>
<comment type="function">
    <text evidence="1">NDH-1 shuttles electrons from NADH, via FMN and iron-sulfur (Fe-S) centers, to quinones in the respiratory chain. The immediate electron acceptor for the enzyme in this species is believed to be ubiquinone. Couples the redox reaction to proton translocation (for every two electrons transferred, four hydrogen ions are translocated across the cytoplasmic membrane), and thus conserves the redox energy in a proton gradient.</text>
</comment>
<comment type="catalytic activity">
    <reaction evidence="1">
        <text>a quinone + NADH + 5 H(+)(in) = a quinol + NAD(+) + 4 H(+)(out)</text>
        <dbReference type="Rhea" id="RHEA:57888"/>
        <dbReference type="ChEBI" id="CHEBI:15378"/>
        <dbReference type="ChEBI" id="CHEBI:24646"/>
        <dbReference type="ChEBI" id="CHEBI:57540"/>
        <dbReference type="ChEBI" id="CHEBI:57945"/>
        <dbReference type="ChEBI" id="CHEBI:132124"/>
    </reaction>
</comment>
<comment type="cofactor">
    <cofactor evidence="1">
        <name>[4Fe-4S] cluster</name>
        <dbReference type="ChEBI" id="CHEBI:49883"/>
    </cofactor>
    <text evidence="1">Binds 2 [4Fe-4S] clusters per subunit.</text>
</comment>
<comment type="subunit">
    <text evidence="1">NDH-1 is composed of 13 different subunits. Subunits NuoA, H, J, K, L, M, N constitute the membrane sector of the complex.</text>
</comment>
<comment type="subcellular location">
    <subcellularLocation>
        <location evidence="1">Cell inner membrane</location>
        <topology evidence="1">Peripheral membrane protein</topology>
    </subcellularLocation>
</comment>
<comment type="similarity">
    <text evidence="1">Belongs to the complex I 23 kDa subunit family.</text>
</comment>